<evidence type="ECO:0000250" key="1"/>
<evidence type="ECO:0000255" key="2"/>
<evidence type="ECO:0000305" key="3"/>
<reference key="1">
    <citation type="journal article" date="1991" name="Biol. Chem. Hoppe-Seyler">
        <title>Evolution of the myelin integral membrane proteins of the central nervous system.</title>
        <authorList>
            <person name="Schliess F."/>
            <person name="Stoffel W."/>
        </authorList>
    </citation>
    <scope>NUCLEOTIDE SEQUENCE [MRNA]</scope>
    <scope>PARTIAL PROTEIN SEQUENCE</scope>
    <source>
        <tissue>Brain</tissue>
    </source>
</reference>
<proteinExistence type="evidence at protein level"/>
<organism>
    <name type="scientific">Gallus gallus</name>
    <name type="common">Chicken</name>
    <dbReference type="NCBI Taxonomy" id="9031"/>
    <lineage>
        <taxon>Eukaryota</taxon>
        <taxon>Metazoa</taxon>
        <taxon>Chordata</taxon>
        <taxon>Craniata</taxon>
        <taxon>Vertebrata</taxon>
        <taxon>Euteleostomi</taxon>
        <taxon>Archelosauria</taxon>
        <taxon>Archosauria</taxon>
        <taxon>Dinosauria</taxon>
        <taxon>Saurischia</taxon>
        <taxon>Theropoda</taxon>
        <taxon>Coelurosauria</taxon>
        <taxon>Aves</taxon>
        <taxon>Neognathae</taxon>
        <taxon>Galloanserae</taxon>
        <taxon>Galliformes</taxon>
        <taxon>Phasianidae</taxon>
        <taxon>Phasianinae</taxon>
        <taxon>Gallus</taxon>
    </lineage>
</organism>
<sequence>MGLLECCARCLIGAPFASLVATGLCFFGVALFCGCGHEALTGTEQLIETYFSKNYQDYEYLIDVIHAFQYVIYGTASFFFLYGALLLAEGFYTTGAVRQIFGDYRTTICGKGLSATVTGGPKGRGARGPQRAHSLQRVCQCLGKWLGHPDKFVGITYVLTIVWLLAFACSAVPVYIYFNTWTTCQSIAFPTKTTASIGTLCADARMYGVLPWNAFPGKVCGSNLLSICKTSEFQMTFHLFIAAFVGAAATLVSLLTFMIAATYNFAVLKLMGRGTKF</sequence>
<protein>
    <recommendedName>
        <fullName>Myelin proteolipid protein</fullName>
        <shortName>PLP</shortName>
    </recommendedName>
    <alternativeName>
        <fullName>Lipophilin</fullName>
    </alternativeName>
</protein>
<comment type="function">
    <text>This is the major myelin protein from the central nervous system. It plays an important role in the formation or maintenance of the multilamellar structure of myelin.</text>
</comment>
<comment type="subcellular location">
    <subcellularLocation>
        <location evidence="1">Cell membrane</location>
        <topology evidence="1">Multi-pass membrane protein</topology>
    </subcellularLocation>
</comment>
<comment type="similarity">
    <text evidence="3">Belongs to the myelin proteolipid protein family.</text>
</comment>
<feature type="initiator methionine" description="Removed">
    <location>
        <position position="1"/>
    </location>
</feature>
<feature type="chain" id="PRO_0000159010" description="Myelin proteolipid protein">
    <location>
        <begin position="2"/>
        <end position="277"/>
    </location>
</feature>
<feature type="topological domain" description="Cytoplasmic" evidence="2">
    <location>
        <begin position="2"/>
        <end position="10"/>
    </location>
</feature>
<feature type="transmembrane region" description="Helical; Name=1" evidence="2">
    <location>
        <begin position="11"/>
        <end position="36"/>
    </location>
</feature>
<feature type="topological domain" description="Extracellular" evidence="2">
    <location>
        <begin position="37"/>
        <end position="59"/>
    </location>
</feature>
<feature type="transmembrane region" description="Helical; Name=2" evidence="2">
    <location>
        <begin position="60"/>
        <end position="88"/>
    </location>
</feature>
<feature type="topological domain" description="Cytoplasmic" evidence="2">
    <location>
        <begin position="89"/>
        <end position="151"/>
    </location>
</feature>
<feature type="transmembrane region" description="Helical; Name=3" evidence="2">
    <location>
        <begin position="152"/>
        <end position="178"/>
    </location>
</feature>
<feature type="topological domain" description="Extracellular" evidence="2">
    <location>
        <begin position="179"/>
        <end position="238"/>
    </location>
</feature>
<feature type="transmembrane region" description="Helical; Name=4" evidence="2">
    <location>
        <begin position="239"/>
        <end position="268"/>
    </location>
</feature>
<feature type="topological domain" description="Cytoplasmic" evidence="2">
    <location>
        <begin position="269"/>
        <end position="277"/>
    </location>
</feature>
<feature type="lipid moiety-binding region" description="S-palmitoyl cysteine" evidence="1">
    <location>
        <position position="6"/>
    </location>
</feature>
<feature type="lipid moiety-binding region" description="S-palmitoyl cysteine" evidence="1">
    <location>
        <position position="7"/>
    </location>
</feature>
<feature type="lipid moiety-binding region" description="S-palmitoyl cysteine" evidence="1">
    <location>
        <position position="10"/>
    </location>
</feature>
<feature type="lipid moiety-binding region" description="S-palmitoyl cysteine" evidence="1">
    <location>
        <position position="109"/>
    </location>
</feature>
<feature type="lipid moiety-binding region" description="S-palmitoyl cysteine" evidence="1">
    <location>
        <position position="139"/>
    </location>
</feature>
<feature type="lipid moiety-binding region" description="S-palmitoyl cysteine" evidence="1">
    <location>
        <position position="141"/>
    </location>
</feature>
<feature type="lipid moiety-binding region" description="O-palmitoyl threonine" evidence="1">
    <location>
        <position position="199"/>
    </location>
</feature>
<feature type="disulfide bond" evidence="1">
    <location>
        <begin position="184"/>
        <end position="228"/>
    </location>
</feature>
<feature type="disulfide bond" evidence="1">
    <location>
        <begin position="201"/>
        <end position="220"/>
    </location>
</feature>
<keyword id="KW-1003">Cell membrane</keyword>
<keyword id="KW-0903">Direct protein sequencing</keyword>
<keyword id="KW-1015">Disulfide bond</keyword>
<keyword id="KW-0449">Lipoprotein</keyword>
<keyword id="KW-0472">Membrane</keyword>
<keyword id="KW-0564">Palmitate</keyword>
<keyword id="KW-1185">Reference proteome</keyword>
<keyword id="KW-0812">Transmembrane</keyword>
<keyword id="KW-1133">Transmembrane helix</keyword>
<gene>
    <name type="primary">PLP1</name>
    <name type="synonym">PLP</name>
</gene>
<name>MYPR_CHICK</name>
<dbReference type="EMBL" id="X61661">
    <property type="protein sequence ID" value="CAA43839.1"/>
    <property type="molecule type" value="mRNA"/>
</dbReference>
<dbReference type="PIR" id="S17600">
    <property type="entry name" value="S17600"/>
</dbReference>
<dbReference type="RefSeq" id="NP_990608.1">
    <property type="nucleotide sequence ID" value="NM_205277.1"/>
</dbReference>
<dbReference type="FunCoup" id="P23289">
    <property type="interactions" value="45"/>
</dbReference>
<dbReference type="STRING" id="9031.ENSGALP00000000160"/>
<dbReference type="PaxDb" id="9031-ENSGALP00000000160"/>
<dbReference type="GeneID" id="396214"/>
<dbReference type="KEGG" id="gga:396214"/>
<dbReference type="CTD" id="5354"/>
<dbReference type="VEuPathDB" id="HostDB:geneid_396214"/>
<dbReference type="eggNOG" id="KOG4800">
    <property type="taxonomic scope" value="Eukaryota"/>
</dbReference>
<dbReference type="InParanoid" id="P23289"/>
<dbReference type="OrthoDB" id="9993736at2759"/>
<dbReference type="PhylomeDB" id="P23289"/>
<dbReference type="PRO" id="PR:P23289"/>
<dbReference type="Proteomes" id="UP000000539">
    <property type="component" value="Unassembled WGS sequence"/>
</dbReference>
<dbReference type="GO" id="GO:0043209">
    <property type="term" value="C:myelin sheath"/>
    <property type="evidence" value="ECO:0000318"/>
    <property type="project" value="GO_Central"/>
</dbReference>
<dbReference type="GO" id="GO:0005886">
    <property type="term" value="C:plasma membrane"/>
    <property type="evidence" value="ECO:0000250"/>
    <property type="project" value="UniProtKB"/>
</dbReference>
<dbReference type="GO" id="GO:0019911">
    <property type="term" value="F:structural constituent of myelin sheath"/>
    <property type="evidence" value="ECO:0000318"/>
    <property type="project" value="GO_Central"/>
</dbReference>
<dbReference type="GO" id="GO:0061564">
    <property type="term" value="P:axon development"/>
    <property type="evidence" value="ECO:0000318"/>
    <property type="project" value="GO_Central"/>
</dbReference>
<dbReference type="GO" id="GO:0022010">
    <property type="term" value="P:central nervous system myelination"/>
    <property type="evidence" value="ECO:0000318"/>
    <property type="project" value="GO_Central"/>
</dbReference>
<dbReference type="InterPro" id="IPR001614">
    <property type="entry name" value="Myelin_PLP"/>
</dbReference>
<dbReference type="InterPro" id="IPR018237">
    <property type="entry name" value="Myelin_PLP_CS"/>
</dbReference>
<dbReference type="PANTHER" id="PTHR11683">
    <property type="entry name" value="MYELIN PROTEOLIPID"/>
    <property type="match status" value="1"/>
</dbReference>
<dbReference type="PANTHER" id="PTHR11683:SF11">
    <property type="entry name" value="MYELIN PROTEOLIPID PROTEIN"/>
    <property type="match status" value="1"/>
</dbReference>
<dbReference type="Pfam" id="PF01275">
    <property type="entry name" value="Myelin_PLP"/>
    <property type="match status" value="2"/>
</dbReference>
<dbReference type="PRINTS" id="PR00214">
    <property type="entry name" value="MYELINPLP"/>
</dbReference>
<dbReference type="SMART" id="SM00002">
    <property type="entry name" value="PLP"/>
    <property type="match status" value="1"/>
</dbReference>
<dbReference type="PROSITE" id="PS00575">
    <property type="entry name" value="MYELIN_PLP_1"/>
    <property type="match status" value="1"/>
</dbReference>
<dbReference type="PROSITE" id="PS01004">
    <property type="entry name" value="MYELIN_PLP_2"/>
    <property type="match status" value="1"/>
</dbReference>
<accession>P23289</accession>